<feature type="chain" id="PRO_0000381585" description="Biotin synthase">
    <location>
        <begin position="1"/>
        <end position="336"/>
    </location>
</feature>
<feature type="domain" description="Radical SAM core" evidence="2">
    <location>
        <begin position="51"/>
        <end position="270"/>
    </location>
</feature>
<feature type="binding site" evidence="1">
    <location>
        <position position="66"/>
    </location>
    <ligand>
        <name>[4Fe-4S] cluster</name>
        <dbReference type="ChEBI" id="CHEBI:49883"/>
        <note>4Fe-4S-S-AdoMet</note>
    </ligand>
</feature>
<feature type="binding site" evidence="1">
    <location>
        <position position="70"/>
    </location>
    <ligand>
        <name>[4Fe-4S] cluster</name>
        <dbReference type="ChEBI" id="CHEBI:49883"/>
        <note>4Fe-4S-S-AdoMet</note>
    </ligand>
</feature>
<feature type="binding site" evidence="1">
    <location>
        <position position="73"/>
    </location>
    <ligand>
        <name>[4Fe-4S] cluster</name>
        <dbReference type="ChEBI" id="CHEBI:49883"/>
        <note>4Fe-4S-S-AdoMet</note>
    </ligand>
</feature>
<feature type="binding site" evidence="1">
    <location>
        <position position="110"/>
    </location>
    <ligand>
        <name>[2Fe-2S] cluster</name>
        <dbReference type="ChEBI" id="CHEBI:190135"/>
    </ligand>
</feature>
<feature type="binding site" evidence="1">
    <location>
        <position position="141"/>
    </location>
    <ligand>
        <name>[2Fe-2S] cluster</name>
        <dbReference type="ChEBI" id="CHEBI:190135"/>
    </ligand>
</feature>
<feature type="binding site" evidence="1">
    <location>
        <position position="201"/>
    </location>
    <ligand>
        <name>[2Fe-2S] cluster</name>
        <dbReference type="ChEBI" id="CHEBI:190135"/>
    </ligand>
</feature>
<feature type="binding site" evidence="1">
    <location>
        <position position="274"/>
    </location>
    <ligand>
        <name>[2Fe-2S] cluster</name>
        <dbReference type="ChEBI" id="CHEBI:190135"/>
    </ligand>
</feature>
<reference key="1">
    <citation type="submission" date="2008-05" db="EMBL/GenBank/DDBJ databases">
        <title>Complete sequence of Rhodopseudomonas palustris TIE-1.</title>
        <authorList>
            <consortium name="US DOE Joint Genome Institute"/>
            <person name="Lucas S."/>
            <person name="Copeland A."/>
            <person name="Lapidus A."/>
            <person name="Glavina del Rio T."/>
            <person name="Dalin E."/>
            <person name="Tice H."/>
            <person name="Pitluck S."/>
            <person name="Chain P."/>
            <person name="Malfatti S."/>
            <person name="Shin M."/>
            <person name="Vergez L."/>
            <person name="Lang D."/>
            <person name="Schmutz J."/>
            <person name="Larimer F."/>
            <person name="Land M."/>
            <person name="Hauser L."/>
            <person name="Kyrpides N."/>
            <person name="Mikhailova N."/>
            <person name="Emerson D."/>
            <person name="Newman D.K."/>
            <person name="Roden E."/>
            <person name="Richardson P."/>
        </authorList>
    </citation>
    <scope>NUCLEOTIDE SEQUENCE [LARGE SCALE GENOMIC DNA]</scope>
    <source>
        <strain>TIE-1</strain>
    </source>
</reference>
<gene>
    <name evidence="1" type="primary">bioB</name>
    <name type="ordered locus">Rpal_2257</name>
</gene>
<name>BIOB_RHOPT</name>
<evidence type="ECO:0000255" key="1">
    <source>
        <dbReference type="HAMAP-Rule" id="MF_01694"/>
    </source>
</evidence>
<evidence type="ECO:0000255" key="2">
    <source>
        <dbReference type="PROSITE-ProRule" id="PRU01266"/>
    </source>
</evidence>
<proteinExistence type="inferred from homology"/>
<organism>
    <name type="scientific">Rhodopseudomonas palustris (strain TIE-1)</name>
    <dbReference type="NCBI Taxonomy" id="395960"/>
    <lineage>
        <taxon>Bacteria</taxon>
        <taxon>Pseudomonadati</taxon>
        <taxon>Pseudomonadota</taxon>
        <taxon>Alphaproteobacteria</taxon>
        <taxon>Hyphomicrobiales</taxon>
        <taxon>Nitrobacteraceae</taxon>
        <taxon>Rhodopseudomonas</taxon>
    </lineage>
</organism>
<comment type="function">
    <text evidence="1">Catalyzes the conversion of dethiobiotin (DTB) to biotin by the insertion of a sulfur atom into dethiobiotin via a radical-based mechanism.</text>
</comment>
<comment type="catalytic activity">
    <reaction evidence="1">
        <text>(4R,5S)-dethiobiotin + (sulfur carrier)-SH + 2 reduced [2Fe-2S]-[ferredoxin] + 2 S-adenosyl-L-methionine = (sulfur carrier)-H + biotin + 2 5'-deoxyadenosine + 2 L-methionine + 2 oxidized [2Fe-2S]-[ferredoxin]</text>
        <dbReference type="Rhea" id="RHEA:22060"/>
        <dbReference type="Rhea" id="RHEA-COMP:10000"/>
        <dbReference type="Rhea" id="RHEA-COMP:10001"/>
        <dbReference type="Rhea" id="RHEA-COMP:14737"/>
        <dbReference type="Rhea" id="RHEA-COMP:14739"/>
        <dbReference type="ChEBI" id="CHEBI:17319"/>
        <dbReference type="ChEBI" id="CHEBI:29917"/>
        <dbReference type="ChEBI" id="CHEBI:33737"/>
        <dbReference type="ChEBI" id="CHEBI:33738"/>
        <dbReference type="ChEBI" id="CHEBI:57586"/>
        <dbReference type="ChEBI" id="CHEBI:57844"/>
        <dbReference type="ChEBI" id="CHEBI:59789"/>
        <dbReference type="ChEBI" id="CHEBI:64428"/>
        <dbReference type="ChEBI" id="CHEBI:149473"/>
        <dbReference type="EC" id="2.8.1.6"/>
    </reaction>
</comment>
<comment type="cofactor">
    <cofactor evidence="1">
        <name>[4Fe-4S] cluster</name>
        <dbReference type="ChEBI" id="CHEBI:49883"/>
    </cofactor>
    <text evidence="1">Binds 1 [4Fe-4S] cluster. The cluster is coordinated with 3 cysteines and an exchangeable S-adenosyl-L-methionine.</text>
</comment>
<comment type="cofactor">
    <cofactor evidence="1">
        <name>[2Fe-2S] cluster</name>
        <dbReference type="ChEBI" id="CHEBI:190135"/>
    </cofactor>
    <text evidence="1">Binds 1 [2Fe-2S] cluster. The cluster is coordinated with 3 cysteines and 1 arginine.</text>
</comment>
<comment type="pathway">
    <text evidence="1">Cofactor biosynthesis; biotin biosynthesis; biotin from 7,8-diaminononanoate: step 2/2.</text>
</comment>
<comment type="subunit">
    <text evidence="1">Homodimer.</text>
</comment>
<comment type="similarity">
    <text evidence="1">Belongs to the radical SAM superfamily. Biotin synthase family.</text>
</comment>
<protein>
    <recommendedName>
        <fullName evidence="1">Biotin synthase</fullName>
        <ecNumber evidence="1">2.8.1.6</ecNumber>
    </recommendedName>
</protein>
<keyword id="KW-0001">2Fe-2S</keyword>
<keyword id="KW-0004">4Fe-4S</keyword>
<keyword id="KW-0093">Biotin biosynthesis</keyword>
<keyword id="KW-0408">Iron</keyword>
<keyword id="KW-0411">Iron-sulfur</keyword>
<keyword id="KW-0479">Metal-binding</keyword>
<keyword id="KW-0949">S-adenosyl-L-methionine</keyword>
<keyword id="KW-0808">Transferase</keyword>
<dbReference type="EC" id="2.8.1.6" evidence="1"/>
<dbReference type="EMBL" id="CP001096">
    <property type="protein sequence ID" value="ACF00778.1"/>
    <property type="molecule type" value="Genomic_DNA"/>
</dbReference>
<dbReference type="RefSeq" id="WP_011157600.1">
    <property type="nucleotide sequence ID" value="NC_011004.1"/>
</dbReference>
<dbReference type="SMR" id="B3QCX3"/>
<dbReference type="GeneID" id="66893089"/>
<dbReference type="KEGG" id="rpt:Rpal_2257"/>
<dbReference type="HOGENOM" id="CLU_033172_1_2_5"/>
<dbReference type="OrthoDB" id="9786826at2"/>
<dbReference type="UniPathway" id="UPA00078">
    <property type="reaction ID" value="UER00162"/>
</dbReference>
<dbReference type="Proteomes" id="UP000001725">
    <property type="component" value="Chromosome"/>
</dbReference>
<dbReference type="GO" id="GO:0051537">
    <property type="term" value="F:2 iron, 2 sulfur cluster binding"/>
    <property type="evidence" value="ECO:0007669"/>
    <property type="project" value="UniProtKB-KW"/>
</dbReference>
<dbReference type="GO" id="GO:0051539">
    <property type="term" value="F:4 iron, 4 sulfur cluster binding"/>
    <property type="evidence" value="ECO:0007669"/>
    <property type="project" value="UniProtKB-KW"/>
</dbReference>
<dbReference type="GO" id="GO:0004076">
    <property type="term" value="F:biotin synthase activity"/>
    <property type="evidence" value="ECO:0007669"/>
    <property type="project" value="UniProtKB-UniRule"/>
</dbReference>
<dbReference type="GO" id="GO:0005506">
    <property type="term" value="F:iron ion binding"/>
    <property type="evidence" value="ECO:0007669"/>
    <property type="project" value="UniProtKB-UniRule"/>
</dbReference>
<dbReference type="GO" id="GO:0009102">
    <property type="term" value="P:biotin biosynthetic process"/>
    <property type="evidence" value="ECO:0007669"/>
    <property type="project" value="UniProtKB-UniRule"/>
</dbReference>
<dbReference type="CDD" id="cd01335">
    <property type="entry name" value="Radical_SAM"/>
    <property type="match status" value="1"/>
</dbReference>
<dbReference type="FunFam" id="3.20.20.70:FF:000011">
    <property type="entry name" value="Biotin synthase"/>
    <property type="match status" value="1"/>
</dbReference>
<dbReference type="Gene3D" id="3.20.20.70">
    <property type="entry name" value="Aldolase class I"/>
    <property type="match status" value="1"/>
</dbReference>
<dbReference type="HAMAP" id="MF_01694">
    <property type="entry name" value="BioB"/>
    <property type="match status" value="1"/>
</dbReference>
<dbReference type="InterPro" id="IPR013785">
    <property type="entry name" value="Aldolase_TIM"/>
</dbReference>
<dbReference type="InterPro" id="IPR010722">
    <property type="entry name" value="BATS_dom"/>
</dbReference>
<dbReference type="InterPro" id="IPR002684">
    <property type="entry name" value="Biotin_synth/BioAB"/>
</dbReference>
<dbReference type="InterPro" id="IPR024177">
    <property type="entry name" value="Biotin_synthase"/>
</dbReference>
<dbReference type="InterPro" id="IPR006638">
    <property type="entry name" value="Elp3/MiaA/NifB-like_rSAM"/>
</dbReference>
<dbReference type="InterPro" id="IPR007197">
    <property type="entry name" value="rSAM"/>
</dbReference>
<dbReference type="NCBIfam" id="TIGR00433">
    <property type="entry name" value="bioB"/>
    <property type="match status" value="1"/>
</dbReference>
<dbReference type="PANTHER" id="PTHR22976">
    <property type="entry name" value="BIOTIN SYNTHASE"/>
    <property type="match status" value="1"/>
</dbReference>
<dbReference type="PANTHER" id="PTHR22976:SF2">
    <property type="entry name" value="BIOTIN SYNTHASE, MITOCHONDRIAL"/>
    <property type="match status" value="1"/>
</dbReference>
<dbReference type="Pfam" id="PF06968">
    <property type="entry name" value="BATS"/>
    <property type="match status" value="1"/>
</dbReference>
<dbReference type="Pfam" id="PF04055">
    <property type="entry name" value="Radical_SAM"/>
    <property type="match status" value="1"/>
</dbReference>
<dbReference type="PIRSF" id="PIRSF001619">
    <property type="entry name" value="Biotin_synth"/>
    <property type="match status" value="1"/>
</dbReference>
<dbReference type="SFLD" id="SFLDF00272">
    <property type="entry name" value="biotin_synthase"/>
    <property type="match status" value="1"/>
</dbReference>
<dbReference type="SFLD" id="SFLDS00029">
    <property type="entry name" value="Radical_SAM"/>
    <property type="match status" value="1"/>
</dbReference>
<dbReference type="SMART" id="SM00876">
    <property type="entry name" value="BATS"/>
    <property type="match status" value="1"/>
</dbReference>
<dbReference type="SMART" id="SM00729">
    <property type="entry name" value="Elp3"/>
    <property type="match status" value="1"/>
</dbReference>
<dbReference type="SUPFAM" id="SSF102114">
    <property type="entry name" value="Radical SAM enzymes"/>
    <property type="match status" value="1"/>
</dbReference>
<dbReference type="PROSITE" id="PS51918">
    <property type="entry name" value="RADICAL_SAM"/>
    <property type="match status" value="1"/>
</dbReference>
<sequence>MNSIAHSTLAAASPTIRHDWTREEAAAIYHAPFADLMFRAQTIHRQTFDPNQVQCNQLLNVKTGGCAEDCGYCSQSAHHDTALPASKLMEPAKVIEAAKAARDAGATRYCMGAAWRSPKERDMAPVIEMVKGVKALGMEACMTLGMLTDDQAKQLADAGLDYYNHNIDTSEEFYASVVKSRSFGDRLDTLEKVQDAGIKVCCGGILGLGEKPTDRVEMLRTLANLPQHPESVPINMLIPIEGTPIAKTATPVDPFEFVRTIALARIMMPKSDVRLAAGRTAMSDEMQALCFLAGANSIFIGDTLLTTPNPGDSKDRALFNRLGITPRDDLGVHAHS</sequence>
<accession>B3QCX3</accession>